<organism>
    <name type="scientific">Aliivibrio fischeri (strain MJ11)</name>
    <name type="common">Vibrio fischeri</name>
    <dbReference type="NCBI Taxonomy" id="388396"/>
    <lineage>
        <taxon>Bacteria</taxon>
        <taxon>Pseudomonadati</taxon>
        <taxon>Pseudomonadota</taxon>
        <taxon>Gammaproteobacteria</taxon>
        <taxon>Vibrionales</taxon>
        <taxon>Vibrionaceae</taxon>
        <taxon>Aliivibrio</taxon>
    </lineage>
</organism>
<accession>B5ETZ2</accession>
<keyword id="KW-0067">ATP-binding</keyword>
<keyword id="KW-0436">Ligase</keyword>
<keyword id="KW-0460">Magnesium</keyword>
<keyword id="KW-0479">Metal-binding</keyword>
<keyword id="KW-0520">NAD</keyword>
<keyword id="KW-0547">Nucleotide-binding</keyword>
<comment type="function">
    <text evidence="1">Catalyzes the ATP-dependent amidation of deamido-NAD to form NAD. Uses ammonia as a nitrogen source.</text>
</comment>
<comment type="catalytic activity">
    <reaction evidence="1">
        <text>deamido-NAD(+) + NH4(+) + ATP = AMP + diphosphate + NAD(+) + H(+)</text>
        <dbReference type="Rhea" id="RHEA:21188"/>
        <dbReference type="ChEBI" id="CHEBI:15378"/>
        <dbReference type="ChEBI" id="CHEBI:28938"/>
        <dbReference type="ChEBI" id="CHEBI:30616"/>
        <dbReference type="ChEBI" id="CHEBI:33019"/>
        <dbReference type="ChEBI" id="CHEBI:57540"/>
        <dbReference type="ChEBI" id="CHEBI:58437"/>
        <dbReference type="ChEBI" id="CHEBI:456215"/>
        <dbReference type="EC" id="6.3.1.5"/>
    </reaction>
</comment>
<comment type="pathway">
    <text evidence="1">Cofactor biosynthesis; NAD(+) biosynthesis; NAD(+) from deamido-NAD(+) (ammonia route): step 1/1.</text>
</comment>
<comment type="subunit">
    <text evidence="1">Homodimer.</text>
</comment>
<comment type="similarity">
    <text evidence="1">Belongs to the NAD synthetase family.</text>
</comment>
<protein>
    <recommendedName>
        <fullName evidence="1">NH(3)-dependent NAD(+) synthetase</fullName>
        <ecNumber evidence="1">6.3.1.5</ecNumber>
    </recommendedName>
</protein>
<reference key="1">
    <citation type="submission" date="2008-08" db="EMBL/GenBank/DDBJ databases">
        <title>Complete sequence of Vibrio fischeri strain MJ11.</title>
        <authorList>
            <person name="Mandel M.J."/>
            <person name="Stabb E.V."/>
            <person name="Ruby E.G."/>
            <person name="Ferriera S."/>
            <person name="Johnson J."/>
            <person name="Kravitz S."/>
            <person name="Beeson K."/>
            <person name="Sutton G."/>
            <person name="Rogers Y.-H."/>
            <person name="Friedman R."/>
            <person name="Frazier M."/>
            <person name="Venter J.C."/>
        </authorList>
    </citation>
    <scope>NUCLEOTIDE SEQUENCE [LARGE SCALE GENOMIC DNA]</scope>
    <source>
        <strain>MJ11</strain>
    </source>
</reference>
<proteinExistence type="inferred from homology"/>
<evidence type="ECO:0000255" key="1">
    <source>
        <dbReference type="HAMAP-Rule" id="MF_00193"/>
    </source>
</evidence>
<gene>
    <name evidence="1" type="primary">nadE</name>
    <name type="ordered locus">VFMJ11_A0612</name>
</gene>
<sequence>MQQHIVEEMKVKVSIDPVEEIKKRVDFIKGKLLEAHCKSLILGISGGVDSTTCGRLAQLAVNELNLETQSSDYQFIAVRLPYGIQQDEDEAQLALQFIQPTHSISINIKDGVDGLHSANHIALQDTGLLPTDSAKIDFVKGNVKARARMIAQYEVAGYVGGLVLGTDHSAENITGFYTKFGDGACDLAPLFGLNKRQVREVAAQLGAPEQLVKKVPTADLEELAPQKADEDALSVSYDQIDDFLEGKKIDADAEARLIKIYQMSQHKRKPIPTIYD</sequence>
<dbReference type="EC" id="6.3.1.5" evidence="1"/>
<dbReference type="EMBL" id="CP001133">
    <property type="protein sequence ID" value="ACH64540.1"/>
    <property type="molecule type" value="Genomic_DNA"/>
</dbReference>
<dbReference type="RefSeq" id="WP_012535593.1">
    <property type="nucleotide sequence ID" value="NC_011186.1"/>
</dbReference>
<dbReference type="SMR" id="B5ETZ2"/>
<dbReference type="KEGG" id="vfm:VFMJ11_A0612"/>
<dbReference type="HOGENOM" id="CLU_059327_3_0_6"/>
<dbReference type="UniPathway" id="UPA00253">
    <property type="reaction ID" value="UER00333"/>
</dbReference>
<dbReference type="Proteomes" id="UP000001857">
    <property type="component" value="Chromosome II"/>
</dbReference>
<dbReference type="GO" id="GO:0005737">
    <property type="term" value="C:cytoplasm"/>
    <property type="evidence" value="ECO:0007669"/>
    <property type="project" value="InterPro"/>
</dbReference>
<dbReference type="GO" id="GO:0005524">
    <property type="term" value="F:ATP binding"/>
    <property type="evidence" value="ECO:0007669"/>
    <property type="project" value="UniProtKB-UniRule"/>
</dbReference>
<dbReference type="GO" id="GO:0004359">
    <property type="term" value="F:glutaminase activity"/>
    <property type="evidence" value="ECO:0007669"/>
    <property type="project" value="InterPro"/>
</dbReference>
<dbReference type="GO" id="GO:0046872">
    <property type="term" value="F:metal ion binding"/>
    <property type="evidence" value="ECO:0007669"/>
    <property type="project" value="UniProtKB-KW"/>
</dbReference>
<dbReference type="GO" id="GO:0003952">
    <property type="term" value="F:NAD+ synthase (glutamine-hydrolyzing) activity"/>
    <property type="evidence" value="ECO:0007669"/>
    <property type="project" value="InterPro"/>
</dbReference>
<dbReference type="GO" id="GO:0008795">
    <property type="term" value="F:NAD+ synthase activity"/>
    <property type="evidence" value="ECO:0007669"/>
    <property type="project" value="UniProtKB-UniRule"/>
</dbReference>
<dbReference type="GO" id="GO:0009435">
    <property type="term" value="P:NAD biosynthetic process"/>
    <property type="evidence" value="ECO:0007669"/>
    <property type="project" value="UniProtKB-UniRule"/>
</dbReference>
<dbReference type="CDD" id="cd00553">
    <property type="entry name" value="NAD_synthase"/>
    <property type="match status" value="1"/>
</dbReference>
<dbReference type="FunFam" id="3.40.50.620:FF:000015">
    <property type="entry name" value="NH(3)-dependent NAD(+) synthetase"/>
    <property type="match status" value="1"/>
</dbReference>
<dbReference type="Gene3D" id="3.40.50.620">
    <property type="entry name" value="HUPs"/>
    <property type="match status" value="1"/>
</dbReference>
<dbReference type="HAMAP" id="MF_00193">
    <property type="entry name" value="NadE_ammonia_dep"/>
    <property type="match status" value="1"/>
</dbReference>
<dbReference type="InterPro" id="IPR022310">
    <property type="entry name" value="NAD/GMP_synthase"/>
</dbReference>
<dbReference type="InterPro" id="IPR003694">
    <property type="entry name" value="NAD_synthase"/>
</dbReference>
<dbReference type="InterPro" id="IPR022926">
    <property type="entry name" value="NH(3)-dep_NAD(+)_synth"/>
</dbReference>
<dbReference type="InterPro" id="IPR014729">
    <property type="entry name" value="Rossmann-like_a/b/a_fold"/>
</dbReference>
<dbReference type="NCBIfam" id="TIGR00552">
    <property type="entry name" value="nadE"/>
    <property type="match status" value="1"/>
</dbReference>
<dbReference type="NCBIfam" id="NF001979">
    <property type="entry name" value="PRK00768.1"/>
    <property type="match status" value="1"/>
</dbReference>
<dbReference type="PANTHER" id="PTHR23090">
    <property type="entry name" value="NH 3 /GLUTAMINE-DEPENDENT NAD + SYNTHETASE"/>
    <property type="match status" value="1"/>
</dbReference>
<dbReference type="PANTHER" id="PTHR23090:SF7">
    <property type="entry name" value="NH(3)-DEPENDENT NAD(+) SYNTHETASE"/>
    <property type="match status" value="1"/>
</dbReference>
<dbReference type="Pfam" id="PF02540">
    <property type="entry name" value="NAD_synthase"/>
    <property type="match status" value="1"/>
</dbReference>
<dbReference type="SUPFAM" id="SSF52402">
    <property type="entry name" value="Adenine nucleotide alpha hydrolases-like"/>
    <property type="match status" value="1"/>
</dbReference>
<feature type="chain" id="PRO_1000099052" description="NH(3)-dependent NAD(+) synthetase">
    <location>
        <begin position="1"/>
        <end position="276"/>
    </location>
</feature>
<feature type="binding site" evidence="1">
    <location>
        <begin position="43"/>
        <end position="50"/>
    </location>
    <ligand>
        <name>ATP</name>
        <dbReference type="ChEBI" id="CHEBI:30616"/>
    </ligand>
</feature>
<feature type="binding site" evidence="1">
    <location>
        <position position="49"/>
    </location>
    <ligand>
        <name>Mg(2+)</name>
        <dbReference type="ChEBI" id="CHEBI:18420"/>
    </ligand>
</feature>
<feature type="binding site" evidence="1">
    <location>
        <position position="146"/>
    </location>
    <ligand>
        <name>deamido-NAD(+)</name>
        <dbReference type="ChEBI" id="CHEBI:58437"/>
    </ligand>
</feature>
<feature type="binding site" evidence="1">
    <location>
        <position position="166"/>
    </location>
    <ligand>
        <name>ATP</name>
        <dbReference type="ChEBI" id="CHEBI:30616"/>
    </ligand>
</feature>
<feature type="binding site" evidence="1">
    <location>
        <position position="171"/>
    </location>
    <ligand>
        <name>Mg(2+)</name>
        <dbReference type="ChEBI" id="CHEBI:18420"/>
    </ligand>
</feature>
<feature type="binding site" evidence="1">
    <location>
        <position position="179"/>
    </location>
    <ligand>
        <name>deamido-NAD(+)</name>
        <dbReference type="ChEBI" id="CHEBI:58437"/>
    </ligand>
</feature>
<feature type="binding site" evidence="1">
    <location>
        <position position="186"/>
    </location>
    <ligand>
        <name>deamido-NAD(+)</name>
        <dbReference type="ChEBI" id="CHEBI:58437"/>
    </ligand>
</feature>
<feature type="binding site" evidence="1">
    <location>
        <position position="195"/>
    </location>
    <ligand>
        <name>ATP</name>
        <dbReference type="ChEBI" id="CHEBI:30616"/>
    </ligand>
</feature>
<feature type="binding site" evidence="1">
    <location>
        <position position="217"/>
    </location>
    <ligand>
        <name>ATP</name>
        <dbReference type="ChEBI" id="CHEBI:30616"/>
    </ligand>
</feature>
<feature type="binding site" evidence="1">
    <location>
        <begin position="266"/>
        <end position="267"/>
    </location>
    <ligand>
        <name>deamido-NAD(+)</name>
        <dbReference type="ChEBI" id="CHEBI:58437"/>
    </ligand>
</feature>
<name>NADE_ALIFM</name>